<gene>
    <name evidence="1" type="primary">rlmD</name>
    <name type="synonym">rumA</name>
    <name type="ordered locus">PSPPH_3717</name>
</gene>
<accession>Q48FH7</accession>
<evidence type="ECO:0000255" key="1">
    <source>
        <dbReference type="HAMAP-Rule" id="MF_01010"/>
    </source>
</evidence>
<name>RLMD_PSE14</name>
<protein>
    <recommendedName>
        <fullName evidence="1">23S rRNA (uracil(1939)-C(5))-methyltransferase RlmD</fullName>
        <ecNumber evidence="1">2.1.1.190</ecNumber>
    </recommendedName>
    <alternativeName>
        <fullName evidence="1">23S rRNA(m5U1939)-methyltransferase</fullName>
    </alternativeName>
</protein>
<feature type="chain" id="PRO_0000229878" description="23S rRNA (uracil(1939)-C(5))-methyltransferase RlmD">
    <location>
        <begin position="1"/>
        <end position="451"/>
    </location>
</feature>
<feature type="domain" description="TRAM" evidence="1">
    <location>
        <begin position="20"/>
        <end position="78"/>
    </location>
</feature>
<feature type="active site" description="Nucleophile" evidence="1">
    <location>
        <position position="407"/>
    </location>
</feature>
<feature type="binding site" evidence="1">
    <location>
        <position position="91"/>
    </location>
    <ligand>
        <name>[4Fe-4S] cluster</name>
        <dbReference type="ChEBI" id="CHEBI:49883"/>
    </ligand>
</feature>
<feature type="binding site" evidence="1">
    <location>
        <position position="97"/>
    </location>
    <ligand>
        <name>[4Fe-4S] cluster</name>
        <dbReference type="ChEBI" id="CHEBI:49883"/>
    </ligand>
</feature>
<feature type="binding site" evidence="1">
    <location>
        <position position="100"/>
    </location>
    <ligand>
        <name>[4Fe-4S] cluster</name>
        <dbReference type="ChEBI" id="CHEBI:49883"/>
    </ligand>
</feature>
<feature type="binding site" evidence="1">
    <location>
        <position position="179"/>
    </location>
    <ligand>
        <name>[4Fe-4S] cluster</name>
        <dbReference type="ChEBI" id="CHEBI:49883"/>
    </ligand>
</feature>
<feature type="binding site" evidence="1">
    <location>
        <position position="283"/>
    </location>
    <ligand>
        <name>S-adenosyl-L-methionine</name>
        <dbReference type="ChEBI" id="CHEBI:59789"/>
    </ligand>
</feature>
<feature type="binding site" evidence="1">
    <location>
        <position position="312"/>
    </location>
    <ligand>
        <name>S-adenosyl-L-methionine</name>
        <dbReference type="ChEBI" id="CHEBI:59789"/>
    </ligand>
</feature>
<feature type="binding site" evidence="1">
    <location>
        <position position="317"/>
    </location>
    <ligand>
        <name>S-adenosyl-L-methionine</name>
        <dbReference type="ChEBI" id="CHEBI:59789"/>
    </ligand>
</feature>
<feature type="binding site" evidence="1">
    <location>
        <position position="333"/>
    </location>
    <ligand>
        <name>S-adenosyl-L-methionine</name>
        <dbReference type="ChEBI" id="CHEBI:59789"/>
    </ligand>
</feature>
<feature type="binding site" evidence="1">
    <location>
        <position position="360"/>
    </location>
    <ligand>
        <name>S-adenosyl-L-methionine</name>
        <dbReference type="ChEBI" id="CHEBI:59789"/>
    </ligand>
</feature>
<feature type="binding site" evidence="1">
    <location>
        <position position="381"/>
    </location>
    <ligand>
        <name>S-adenosyl-L-methionine</name>
        <dbReference type="ChEBI" id="CHEBI:59789"/>
    </ligand>
</feature>
<reference key="1">
    <citation type="journal article" date="2005" name="J. Bacteriol.">
        <title>Whole-genome sequence analysis of Pseudomonas syringae pv. phaseolicola 1448A reveals divergence among pathovars in genes involved in virulence and transposition.</title>
        <authorList>
            <person name="Joardar V."/>
            <person name="Lindeberg M."/>
            <person name="Jackson R.W."/>
            <person name="Selengut J."/>
            <person name="Dodson R."/>
            <person name="Brinkac L.M."/>
            <person name="Daugherty S.C."/>
            <person name="DeBoy R.T."/>
            <person name="Durkin A.S."/>
            <person name="Gwinn Giglio M."/>
            <person name="Madupu R."/>
            <person name="Nelson W.C."/>
            <person name="Rosovitz M.J."/>
            <person name="Sullivan S.A."/>
            <person name="Crabtree J."/>
            <person name="Creasy T."/>
            <person name="Davidsen T.M."/>
            <person name="Haft D.H."/>
            <person name="Zafar N."/>
            <person name="Zhou L."/>
            <person name="Halpin R."/>
            <person name="Holley T."/>
            <person name="Khouri H.M."/>
            <person name="Feldblyum T.V."/>
            <person name="White O."/>
            <person name="Fraser C.M."/>
            <person name="Chatterjee A.K."/>
            <person name="Cartinhour S."/>
            <person name="Schneider D."/>
            <person name="Mansfield J.W."/>
            <person name="Collmer A."/>
            <person name="Buell R."/>
        </authorList>
    </citation>
    <scope>NUCLEOTIDE SEQUENCE [LARGE SCALE GENOMIC DNA]</scope>
    <source>
        <strain>1448A / Race 6</strain>
    </source>
</reference>
<organism>
    <name type="scientific">Pseudomonas savastanoi pv. phaseolicola (strain 1448A / Race 6)</name>
    <name type="common">Pseudomonas syringae pv. phaseolicola (strain 1448A / Race 6)</name>
    <dbReference type="NCBI Taxonomy" id="264730"/>
    <lineage>
        <taxon>Bacteria</taxon>
        <taxon>Pseudomonadati</taxon>
        <taxon>Pseudomonadota</taxon>
        <taxon>Gammaproteobacteria</taxon>
        <taxon>Pseudomonadales</taxon>
        <taxon>Pseudomonadaceae</taxon>
        <taxon>Pseudomonas</taxon>
    </lineage>
</organism>
<proteinExistence type="inferred from homology"/>
<dbReference type="EC" id="2.1.1.190" evidence="1"/>
<dbReference type="EMBL" id="CP000058">
    <property type="protein sequence ID" value="AAZ34129.1"/>
    <property type="molecule type" value="Genomic_DNA"/>
</dbReference>
<dbReference type="RefSeq" id="WP_011169246.1">
    <property type="nucleotide sequence ID" value="NC_005773.3"/>
</dbReference>
<dbReference type="SMR" id="Q48FH7"/>
<dbReference type="KEGG" id="psp:PSPPH_3717"/>
<dbReference type="eggNOG" id="COG2265">
    <property type="taxonomic scope" value="Bacteria"/>
</dbReference>
<dbReference type="HOGENOM" id="CLU_014689_8_2_6"/>
<dbReference type="Proteomes" id="UP000000551">
    <property type="component" value="Chromosome"/>
</dbReference>
<dbReference type="GO" id="GO:0051539">
    <property type="term" value="F:4 iron, 4 sulfur cluster binding"/>
    <property type="evidence" value="ECO:0007669"/>
    <property type="project" value="UniProtKB-KW"/>
</dbReference>
<dbReference type="GO" id="GO:0005506">
    <property type="term" value="F:iron ion binding"/>
    <property type="evidence" value="ECO:0007669"/>
    <property type="project" value="UniProtKB-UniRule"/>
</dbReference>
<dbReference type="GO" id="GO:0003723">
    <property type="term" value="F:RNA binding"/>
    <property type="evidence" value="ECO:0007669"/>
    <property type="project" value="InterPro"/>
</dbReference>
<dbReference type="GO" id="GO:0070041">
    <property type="term" value="F:rRNA (uridine-C5-)-methyltransferase activity"/>
    <property type="evidence" value="ECO:0007669"/>
    <property type="project" value="UniProtKB-UniRule"/>
</dbReference>
<dbReference type="GO" id="GO:0070475">
    <property type="term" value="P:rRNA base methylation"/>
    <property type="evidence" value="ECO:0007669"/>
    <property type="project" value="TreeGrafter"/>
</dbReference>
<dbReference type="CDD" id="cd02440">
    <property type="entry name" value="AdoMet_MTases"/>
    <property type="match status" value="1"/>
</dbReference>
<dbReference type="FunFam" id="3.40.50.150:FF:000009">
    <property type="entry name" value="23S rRNA (Uracil(1939)-C(5))-methyltransferase RlmD"/>
    <property type="match status" value="1"/>
</dbReference>
<dbReference type="Gene3D" id="2.40.50.1070">
    <property type="match status" value="1"/>
</dbReference>
<dbReference type="Gene3D" id="2.40.50.140">
    <property type="entry name" value="Nucleic acid-binding proteins"/>
    <property type="match status" value="1"/>
</dbReference>
<dbReference type="Gene3D" id="3.40.50.150">
    <property type="entry name" value="Vaccinia Virus protein VP39"/>
    <property type="match status" value="1"/>
</dbReference>
<dbReference type="HAMAP" id="MF_01010">
    <property type="entry name" value="23SrRNA_methyltr_RlmD"/>
    <property type="match status" value="1"/>
</dbReference>
<dbReference type="InterPro" id="IPR001566">
    <property type="entry name" value="23S_rRNA_MeTrfase_RlmD"/>
</dbReference>
<dbReference type="InterPro" id="IPR030390">
    <property type="entry name" value="MeTrfase_TrmA_AS"/>
</dbReference>
<dbReference type="InterPro" id="IPR030391">
    <property type="entry name" value="MeTrfase_TrmA_CS"/>
</dbReference>
<dbReference type="InterPro" id="IPR012340">
    <property type="entry name" value="NA-bd_OB-fold"/>
</dbReference>
<dbReference type="InterPro" id="IPR029063">
    <property type="entry name" value="SAM-dependent_MTases_sf"/>
</dbReference>
<dbReference type="InterPro" id="IPR002792">
    <property type="entry name" value="TRAM_dom"/>
</dbReference>
<dbReference type="InterPro" id="IPR010280">
    <property type="entry name" value="U5_MeTrfase_fam"/>
</dbReference>
<dbReference type="NCBIfam" id="NF009639">
    <property type="entry name" value="PRK13168.1"/>
    <property type="match status" value="1"/>
</dbReference>
<dbReference type="NCBIfam" id="TIGR00479">
    <property type="entry name" value="rumA"/>
    <property type="match status" value="1"/>
</dbReference>
<dbReference type="PANTHER" id="PTHR11061:SF49">
    <property type="entry name" value="23S RRNA (URACIL(1939)-C(5))-METHYLTRANSFERASE RLMD"/>
    <property type="match status" value="1"/>
</dbReference>
<dbReference type="PANTHER" id="PTHR11061">
    <property type="entry name" value="RNA M5U METHYLTRANSFERASE"/>
    <property type="match status" value="1"/>
</dbReference>
<dbReference type="Pfam" id="PF01938">
    <property type="entry name" value="TRAM"/>
    <property type="match status" value="1"/>
</dbReference>
<dbReference type="Pfam" id="PF05958">
    <property type="entry name" value="tRNA_U5-meth_tr"/>
    <property type="match status" value="1"/>
</dbReference>
<dbReference type="SUPFAM" id="SSF50249">
    <property type="entry name" value="Nucleic acid-binding proteins"/>
    <property type="match status" value="1"/>
</dbReference>
<dbReference type="SUPFAM" id="SSF53335">
    <property type="entry name" value="S-adenosyl-L-methionine-dependent methyltransferases"/>
    <property type="match status" value="1"/>
</dbReference>
<dbReference type="PROSITE" id="PS51687">
    <property type="entry name" value="SAM_MT_RNA_M5U"/>
    <property type="match status" value="1"/>
</dbReference>
<dbReference type="PROSITE" id="PS50926">
    <property type="entry name" value="TRAM"/>
    <property type="match status" value="1"/>
</dbReference>
<dbReference type="PROSITE" id="PS01230">
    <property type="entry name" value="TRMA_1"/>
    <property type="match status" value="1"/>
</dbReference>
<dbReference type="PROSITE" id="PS01231">
    <property type="entry name" value="TRMA_2"/>
    <property type="match status" value="1"/>
</dbReference>
<sequence>MAKHERGLRFQPAGGVKTVQIPAGKKQRLTIERLSDDGRGIAFLEGKTWFVAGSLAGEEVEARVLNARGKVVEARTERVFTASTMRRAPACEYFGRCGGCSVQHVPHEEQLALKQRMLAEQLLRVANVVPDEWAAPLSGAELAYRRRARVAVRWDAKAKRLDVGFRAAASQDIVSIEHCPVLVQALQPIMNELPGMLKNFSKPQALGHVELFSGVATAVLLRHTAPLAEADLALLQAFCSKHGAQLWLHGEGEPQPVSPGDTLGYRLEPWNLQLAWRPGDFIQVNAAVNTAMIEQALQWLAPAKDERVMDLFCGLGNFALPLAGLAREVVAVEGVATMVERAAVNAMSNDLHNVQFFQADLSQPLTHADWAAEGFSTVLLDPPRDGAFEVVRQIRKTGARRLLYVSCNPATLARDTVELISQGYRLKRAGILDMFPQTAHVEAMALFEMSK</sequence>
<keyword id="KW-0004">4Fe-4S</keyword>
<keyword id="KW-0408">Iron</keyword>
<keyword id="KW-0411">Iron-sulfur</keyword>
<keyword id="KW-0479">Metal-binding</keyword>
<keyword id="KW-0489">Methyltransferase</keyword>
<keyword id="KW-0698">rRNA processing</keyword>
<keyword id="KW-0949">S-adenosyl-L-methionine</keyword>
<keyword id="KW-0808">Transferase</keyword>
<comment type="function">
    <text evidence="1">Catalyzes the formation of 5-methyl-uridine at position 1939 (m5U1939) in 23S rRNA.</text>
</comment>
<comment type="catalytic activity">
    <reaction evidence="1">
        <text>uridine(1939) in 23S rRNA + S-adenosyl-L-methionine = 5-methyluridine(1939) in 23S rRNA + S-adenosyl-L-homocysteine + H(+)</text>
        <dbReference type="Rhea" id="RHEA:42908"/>
        <dbReference type="Rhea" id="RHEA-COMP:10278"/>
        <dbReference type="Rhea" id="RHEA-COMP:10279"/>
        <dbReference type="ChEBI" id="CHEBI:15378"/>
        <dbReference type="ChEBI" id="CHEBI:57856"/>
        <dbReference type="ChEBI" id="CHEBI:59789"/>
        <dbReference type="ChEBI" id="CHEBI:65315"/>
        <dbReference type="ChEBI" id="CHEBI:74447"/>
        <dbReference type="EC" id="2.1.1.190"/>
    </reaction>
</comment>
<comment type="similarity">
    <text evidence="1">Belongs to the class I-like SAM-binding methyltransferase superfamily. RNA M5U methyltransferase family. RlmD subfamily.</text>
</comment>